<feature type="chain" id="PRO_1000204590" description="Glycine--tRNA ligase alpha subunit">
    <location>
        <begin position="1"/>
        <end position="296"/>
    </location>
</feature>
<proteinExistence type="inferred from homology"/>
<dbReference type="EC" id="6.1.1.14" evidence="1"/>
<dbReference type="EMBL" id="FM242711">
    <property type="protein sequence ID" value="CAS05231.1"/>
    <property type="molecule type" value="Genomic_DNA"/>
</dbReference>
<dbReference type="RefSeq" id="WP_003727430.1">
    <property type="nucleotide sequence ID" value="NC_012488.1"/>
</dbReference>
<dbReference type="SMR" id="C1KVA6"/>
<dbReference type="KEGG" id="lmc:Lm4b_01469"/>
<dbReference type="HOGENOM" id="CLU_057066_1_0_9"/>
<dbReference type="GO" id="GO:0005829">
    <property type="term" value="C:cytosol"/>
    <property type="evidence" value="ECO:0007669"/>
    <property type="project" value="TreeGrafter"/>
</dbReference>
<dbReference type="GO" id="GO:0005524">
    <property type="term" value="F:ATP binding"/>
    <property type="evidence" value="ECO:0007669"/>
    <property type="project" value="UniProtKB-UniRule"/>
</dbReference>
<dbReference type="GO" id="GO:0140096">
    <property type="term" value="F:catalytic activity, acting on a protein"/>
    <property type="evidence" value="ECO:0007669"/>
    <property type="project" value="UniProtKB-ARBA"/>
</dbReference>
<dbReference type="GO" id="GO:0004820">
    <property type="term" value="F:glycine-tRNA ligase activity"/>
    <property type="evidence" value="ECO:0007669"/>
    <property type="project" value="UniProtKB-UniRule"/>
</dbReference>
<dbReference type="GO" id="GO:0016740">
    <property type="term" value="F:transferase activity"/>
    <property type="evidence" value="ECO:0007669"/>
    <property type="project" value="UniProtKB-ARBA"/>
</dbReference>
<dbReference type="GO" id="GO:0006426">
    <property type="term" value="P:glycyl-tRNA aminoacylation"/>
    <property type="evidence" value="ECO:0007669"/>
    <property type="project" value="UniProtKB-UniRule"/>
</dbReference>
<dbReference type="CDD" id="cd00733">
    <property type="entry name" value="GlyRS_alpha_core"/>
    <property type="match status" value="1"/>
</dbReference>
<dbReference type="FunFam" id="3.30.930.10:FF:000006">
    <property type="entry name" value="Glycine--tRNA ligase alpha subunit"/>
    <property type="match status" value="1"/>
</dbReference>
<dbReference type="Gene3D" id="3.30.930.10">
    <property type="entry name" value="Bira Bifunctional Protein, Domain 2"/>
    <property type="match status" value="1"/>
</dbReference>
<dbReference type="Gene3D" id="1.20.58.180">
    <property type="entry name" value="Class II aaRS and biotin synthetases, domain 2"/>
    <property type="match status" value="1"/>
</dbReference>
<dbReference type="HAMAP" id="MF_00254">
    <property type="entry name" value="Gly_tRNA_synth_alpha"/>
    <property type="match status" value="1"/>
</dbReference>
<dbReference type="InterPro" id="IPR045864">
    <property type="entry name" value="aa-tRNA-synth_II/BPL/LPL"/>
</dbReference>
<dbReference type="InterPro" id="IPR006194">
    <property type="entry name" value="Gly-tRNA-synth_heterodimer"/>
</dbReference>
<dbReference type="InterPro" id="IPR002310">
    <property type="entry name" value="Gly-tRNA_ligase_asu"/>
</dbReference>
<dbReference type="NCBIfam" id="TIGR00388">
    <property type="entry name" value="glyQ"/>
    <property type="match status" value="1"/>
</dbReference>
<dbReference type="NCBIfam" id="NF006827">
    <property type="entry name" value="PRK09348.1"/>
    <property type="match status" value="1"/>
</dbReference>
<dbReference type="PANTHER" id="PTHR30075:SF2">
    <property type="entry name" value="GLYCINE--TRNA LIGASE, CHLOROPLASTIC_MITOCHONDRIAL 2"/>
    <property type="match status" value="1"/>
</dbReference>
<dbReference type="PANTHER" id="PTHR30075">
    <property type="entry name" value="GLYCYL-TRNA SYNTHETASE"/>
    <property type="match status" value="1"/>
</dbReference>
<dbReference type="Pfam" id="PF02091">
    <property type="entry name" value="tRNA-synt_2e"/>
    <property type="match status" value="1"/>
</dbReference>
<dbReference type="PRINTS" id="PR01044">
    <property type="entry name" value="TRNASYNTHGA"/>
</dbReference>
<dbReference type="SUPFAM" id="SSF55681">
    <property type="entry name" value="Class II aaRS and biotin synthetases"/>
    <property type="match status" value="1"/>
</dbReference>
<dbReference type="PROSITE" id="PS50861">
    <property type="entry name" value="AA_TRNA_LIGASE_II_GLYAB"/>
    <property type="match status" value="1"/>
</dbReference>
<organism>
    <name type="scientific">Listeria monocytogenes serotype 4b (strain CLIP80459)</name>
    <dbReference type="NCBI Taxonomy" id="568819"/>
    <lineage>
        <taxon>Bacteria</taxon>
        <taxon>Bacillati</taxon>
        <taxon>Bacillota</taxon>
        <taxon>Bacilli</taxon>
        <taxon>Bacillales</taxon>
        <taxon>Listeriaceae</taxon>
        <taxon>Listeria</taxon>
    </lineage>
</organism>
<comment type="catalytic activity">
    <reaction evidence="1">
        <text>tRNA(Gly) + glycine + ATP = glycyl-tRNA(Gly) + AMP + diphosphate</text>
        <dbReference type="Rhea" id="RHEA:16013"/>
        <dbReference type="Rhea" id="RHEA-COMP:9664"/>
        <dbReference type="Rhea" id="RHEA-COMP:9683"/>
        <dbReference type="ChEBI" id="CHEBI:30616"/>
        <dbReference type="ChEBI" id="CHEBI:33019"/>
        <dbReference type="ChEBI" id="CHEBI:57305"/>
        <dbReference type="ChEBI" id="CHEBI:78442"/>
        <dbReference type="ChEBI" id="CHEBI:78522"/>
        <dbReference type="ChEBI" id="CHEBI:456215"/>
        <dbReference type="EC" id="6.1.1.14"/>
    </reaction>
</comment>
<comment type="subunit">
    <text evidence="1">Tetramer of two alpha and two beta subunits.</text>
</comment>
<comment type="subcellular location">
    <subcellularLocation>
        <location evidence="1">Cytoplasm</location>
    </subcellularLocation>
</comment>
<comment type="similarity">
    <text evidence="1">Belongs to the class-II aminoacyl-tRNA synthetase family.</text>
</comment>
<reference key="1">
    <citation type="journal article" date="2012" name="BMC Genomics">
        <title>Comparative genomics and transcriptomics of lineages I, II, and III strains of Listeria monocytogenes.</title>
        <authorList>
            <person name="Hain T."/>
            <person name="Ghai R."/>
            <person name="Billion A."/>
            <person name="Kuenne C.T."/>
            <person name="Steinweg C."/>
            <person name="Izar B."/>
            <person name="Mohamed W."/>
            <person name="Mraheil M."/>
            <person name="Domann E."/>
            <person name="Schaffrath S."/>
            <person name="Karst U."/>
            <person name="Goesmann A."/>
            <person name="Oehm S."/>
            <person name="Puhler A."/>
            <person name="Merkl R."/>
            <person name="Vorwerk S."/>
            <person name="Glaser P."/>
            <person name="Garrido P."/>
            <person name="Rusniok C."/>
            <person name="Buchrieser C."/>
            <person name="Goebel W."/>
            <person name="Chakraborty T."/>
        </authorList>
    </citation>
    <scope>NUCLEOTIDE SEQUENCE [LARGE SCALE GENOMIC DNA]</scope>
    <source>
        <strain>CLIP80459</strain>
    </source>
</reference>
<name>SYGA_LISMC</name>
<accession>C1KVA6</accession>
<protein>
    <recommendedName>
        <fullName evidence="1">Glycine--tRNA ligase alpha subunit</fullName>
        <ecNumber evidence="1">6.1.1.14</ecNumber>
    </recommendedName>
    <alternativeName>
        <fullName evidence="1">Glycyl-tRNA synthetase alpha subunit</fullName>
        <shortName evidence="1">GlyRS</shortName>
    </alternativeName>
</protein>
<sequence length="296" mass="34316">MNLQTMIRTLQDYWSEQGCIMLQSYDVEKGAGTMSPYTFLKAIGPEPWKAGYVEPSRRPADGRYGENPNRLFQHHQFQVVMKPSPDNIQELYLGSLEKLGINPLEHDIRFVEDNWENPSLGCAGLGWEVWLDGMEITQFTYFQQVGGLECFPVTSEITYGVERLASYIQDKENVFDLEWTEGISYRDIFFQAEFENSTYAFETSNTDMLLTLFDTYEREATRQMQDGLVFPAYDYVLKCSHTFNLLDARGVVSVTERAQYIGRIRNLARRIAKTFYESREKLGFPLVKEEGGKRHE</sequence>
<keyword id="KW-0030">Aminoacyl-tRNA synthetase</keyword>
<keyword id="KW-0067">ATP-binding</keyword>
<keyword id="KW-0963">Cytoplasm</keyword>
<keyword id="KW-0436">Ligase</keyword>
<keyword id="KW-0547">Nucleotide-binding</keyword>
<keyword id="KW-0648">Protein biosynthesis</keyword>
<gene>
    <name evidence="1" type="primary">glyQ</name>
    <name type="ordered locus">Lm4b_01469</name>
</gene>
<evidence type="ECO:0000255" key="1">
    <source>
        <dbReference type="HAMAP-Rule" id="MF_00254"/>
    </source>
</evidence>